<sequence>MFGITSRPYHRWSSFAQALRILQSGTTLALELDHSSLFFSKRNITSCCHHTKPASHTPTSSNSIWTPSPLAESRLRSGYSLKPAHTNRVVTRRYASTTPKDSQPDPQAKTVSKRPAKKMEQWRLQKEALKKKFQEGWAPPKRLSPDAIEGVRELHQQNPQKFSTAVLAEHFKMSPEAIRRILKSKWRPSEKEMEKRRERWERRETRIWDHMSELGLRPLRKRPSSPASDKSSDAETRNRQPLHSIASTLLIQRDISPMWVLLLR</sequence>
<organism>
    <name type="scientific">Coccidioides posadasii (strain C735)</name>
    <name type="common">Valley fever fungus</name>
    <dbReference type="NCBI Taxonomy" id="222929"/>
    <lineage>
        <taxon>Eukaryota</taxon>
        <taxon>Fungi</taxon>
        <taxon>Dikarya</taxon>
        <taxon>Ascomycota</taxon>
        <taxon>Pezizomycotina</taxon>
        <taxon>Eurotiomycetes</taxon>
        <taxon>Eurotiomycetidae</taxon>
        <taxon>Onygenales</taxon>
        <taxon>Onygenaceae</taxon>
        <taxon>Coccidioides</taxon>
    </lineage>
</organism>
<evidence type="ECO:0000250" key="1"/>
<evidence type="ECO:0000255" key="2"/>
<evidence type="ECO:0000256" key="3">
    <source>
        <dbReference type="SAM" id="MobiDB-lite"/>
    </source>
</evidence>
<evidence type="ECO:0000305" key="4"/>
<dbReference type="EMBL" id="ACFW01000041">
    <property type="protein sequence ID" value="EER25385.1"/>
    <property type="molecule type" value="Genomic_DNA"/>
</dbReference>
<dbReference type="RefSeq" id="XP_003067530.1">
    <property type="nucleotide sequence ID" value="XM_003067484.1"/>
</dbReference>
<dbReference type="SMR" id="C5PBQ8"/>
<dbReference type="GeneID" id="9693013"/>
<dbReference type="KEGG" id="cpw:9693013"/>
<dbReference type="VEuPathDB" id="FungiDB:CPC735_064850"/>
<dbReference type="HOGENOM" id="CLU_1053773_0_0_1"/>
<dbReference type="OrthoDB" id="5578174at2759"/>
<dbReference type="Proteomes" id="UP000009084">
    <property type="component" value="Unassembled WGS sequence"/>
</dbReference>
<dbReference type="GO" id="GO:0005739">
    <property type="term" value="C:mitochondrion"/>
    <property type="evidence" value="ECO:0007669"/>
    <property type="project" value="UniProtKB-SubCell"/>
</dbReference>
<dbReference type="GO" id="GO:0005634">
    <property type="term" value="C:nucleus"/>
    <property type="evidence" value="ECO:0007669"/>
    <property type="project" value="TreeGrafter"/>
</dbReference>
<dbReference type="InterPro" id="IPR010487">
    <property type="entry name" value="NGRN/Rrg9"/>
</dbReference>
<dbReference type="PANTHER" id="PTHR13475">
    <property type="entry name" value="NEUGRIN"/>
    <property type="match status" value="1"/>
</dbReference>
<dbReference type="PANTHER" id="PTHR13475:SF3">
    <property type="entry name" value="NEUGRIN"/>
    <property type="match status" value="1"/>
</dbReference>
<dbReference type="Pfam" id="PF06413">
    <property type="entry name" value="Neugrin"/>
    <property type="match status" value="1"/>
</dbReference>
<keyword id="KW-0496">Mitochondrion</keyword>
<keyword id="KW-0809">Transit peptide</keyword>
<accession>C5PBQ8</accession>
<proteinExistence type="inferred from homology"/>
<reference key="1">
    <citation type="journal article" date="2009" name="Genome Res.">
        <title>Comparative genomic analyses of the human fungal pathogens Coccidioides and their relatives.</title>
        <authorList>
            <person name="Sharpton T.J."/>
            <person name="Stajich J.E."/>
            <person name="Rounsley S.D."/>
            <person name="Gardner M.J."/>
            <person name="Wortman J.R."/>
            <person name="Jordar V.S."/>
            <person name="Maiti R."/>
            <person name="Kodira C.D."/>
            <person name="Neafsey D.E."/>
            <person name="Zeng Q."/>
            <person name="Hung C.-Y."/>
            <person name="McMahan C."/>
            <person name="Muszewska A."/>
            <person name="Grynberg M."/>
            <person name="Mandel M.A."/>
            <person name="Kellner E.M."/>
            <person name="Barker B.M."/>
            <person name="Galgiani J.N."/>
            <person name="Orbach M.J."/>
            <person name="Kirkland T.N."/>
            <person name="Cole G.T."/>
            <person name="Henn M.R."/>
            <person name="Birren B.W."/>
            <person name="Taylor J.W."/>
        </authorList>
    </citation>
    <scope>NUCLEOTIDE SEQUENCE [LARGE SCALE GENOMIC DNA]</scope>
    <source>
        <strain>C735</strain>
    </source>
</reference>
<comment type="function">
    <text evidence="1">Required for respiratory activity and maintenance and expression of the mitochondrial genome.</text>
</comment>
<comment type="subcellular location">
    <subcellularLocation>
        <location evidence="1">Mitochondrion</location>
    </subcellularLocation>
</comment>
<comment type="similarity">
    <text evidence="4">Belongs to the RRG9 family.</text>
</comment>
<feature type="transit peptide" description="Mitochondrion" evidence="2">
    <location>
        <begin position="1"/>
        <end position="12"/>
    </location>
</feature>
<feature type="chain" id="PRO_0000407945" description="Required for respiratory growth protein 9, mitochondrial">
    <location>
        <begin position="13"/>
        <end position="264"/>
    </location>
</feature>
<feature type="region of interest" description="Disordered" evidence="3">
    <location>
        <begin position="86"/>
        <end position="117"/>
    </location>
</feature>
<feature type="region of interest" description="Disordered" evidence="3">
    <location>
        <begin position="218"/>
        <end position="240"/>
    </location>
</feature>
<feature type="compositionally biased region" description="Polar residues" evidence="3">
    <location>
        <begin position="94"/>
        <end position="105"/>
    </location>
</feature>
<name>RRG9_COCP7</name>
<protein>
    <recommendedName>
        <fullName>Required for respiratory growth protein 9, mitochondrial</fullName>
    </recommendedName>
</protein>
<gene>
    <name type="primary">RRG9</name>
    <name type="ORF">CPC735_064850</name>
</gene>